<protein>
    <recommendedName>
        <fullName evidence="3">Ornithine cyclodeaminase</fullName>
        <shortName evidence="3">OCD</shortName>
        <ecNumber evidence="2">4.3.1.12</ecNumber>
    </recommendedName>
</protein>
<gene>
    <name evidence="4" type="primary">ocd</name>
    <name evidence="7" type="ordered locus">PP_3533</name>
</gene>
<proteinExistence type="evidence at protein level"/>
<name>OCD_PSEPK</name>
<reference key="1">
    <citation type="journal article" date="2002" name="Environ. Microbiol.">
        <title>Complete genome sequence and comparative analysis of the metabolically versatile Pseudomonas putida KT2440.</title>
        <authorList>
            <person name="Nelson K.E."/>
            <person name="Weinel C."/>
            <person name="Paulsen I.T."/>
            <person name="Dodson R.J."/>
            <person name="Hilbert H."/>
            <person name="Martins dos Santos V.A.P."/>
            <person name="Fouts D.E."/>
            <person name="Gill S.R."/>
            <person name="Pop M."/>
            <person name="Holmes M."/>
            <person name="Brinkac L.M."/>
            <person name="Beanan M.J."/>
            <person name="DeBoy R.T."/>
            <person name="Daugherty S.C."/>
            <person name="Kolonay J.F."/>
            <person name="Madupu R."/>
            <person name="Nelson W.C."/>
            <person name="White O."/>
            <person name="Peterson J.D."/>
            <person name="Khouri H.M."/>
            <person name="Hance I."/>
            <person name="Chris Lee P."/>
            <person name="Holtzapple E.K."/>
            <person name="Scanlan D."/>
            <person name="Tran K."/>
            <person name="Moazzez A."/>
            <person name="Utterback T.R."/>
            <person name="Rizzo M."/>
            <person name="Lee K."/>
            <person name="Kosack D."/>
            <person name="Moestl D."/>
            <person name="Wedler H."/>
            <person name="Lauber J."/>
            <person name="Stjepandic D."/>
            <person name="Hoheisel J."/>
            <person name="Straetz M."/>
            <person name="Heim S."/>
            <person name="Kiewitz C."/>
            <person name="Eisen J.A."/>
            <person name="Timmis K.N."/>
            <person name="Duesterhoeft A."/>
            <person name="Tuemmler B."/>
            <person name="Fraser C.M."/>
        </authorList>
    </citation>
    <scope>NUCLEOTIDE SEQUENCE [LARGE SCALE GENOMIC DNA]</scope>
    <source>
        <strain>ATCC 47054 / DSM 6125 / CFBP 8728 / NCIMB 11950 / KT2440</strain>
    </source>
</reference>
<reference key="2">
    <citation type="journal article" date="2004" name="Acta Crystallogr. D">
        <title>Crystallization and X-ray diffraction analysis of ornithine cyclodeaminase from Pseudomonas putida.</title>
        <authorList>
            <person name="Alam S."/>
            <person name="Wang S.C."/>
            <person name="Ruzicka F.J."/>
            <person name="Frey P.A."/>
            <person name="Wedekind J.E."/>
        </authorList>
    </citation>
    <scope>CRYSTALLIZATION</scope>
</reference>
<reference key="3">
    <citation type="journal article" date="2013" name="Microb. Cell Fact.">
        <title>Ornithine cyclodeaminase-based proline production by Corynebacterium glutamicum.</title>
        <authorList>
            <person name="Jensen J.V."/>
            <person name="Wendisch V.F."/>
        </authorList>
    </citation>
    <scope>FUNCTION</scope>
    <scope>CATALYTIC ACTIVITY</scope>
    <scope>BIOTECHNOLOGY</scope>
    <scope>PATHWAY</scope>
</reference>
<reference evidence="8 9" key="4">
    <citation type="journal article" date="2004" name="Biochemistry">
        <title>Ornithine cyclodeaminase: structure, mechanism of action, and implications for the mu-crystallin family.</title>
        <authorList>
            <person name="Goodman J.L."/>
            <person name="Wang S."/>
            <person name="Alam S."/>
            <person name="Ruzicka F.J."/>
            <person name="Frey P.A."/>
            <person name="Wedekind J.E."/>
        </authorList>
    </citation>
    <scope>X-RAY CRYSTALLOGRAPHY (1.60 ANGSTROMS) IN COMPLEXES WITH NADH AND L-ORNITHINE</scope>
    <scope>COFACTOR</scope>
    <scope>SUBUNIT</scope>
    <scope>REACTION MECHANISM</scope>
    <scope>ACTIVE SITE</scope>
</reference>
<keyword id="KW-0002">3D-structure</keyword>
<keyword id="KW-0028">Amino-acid biosynthesis</keyword>
<keyword id="KW-0456">Lyase</keyword>
<keyword id="KW-0520">NAD</keyword>
<keyword id="KW-0547">Nucleotide-binding</keyword>
<keyword id="KW-1185">Reference proteome</keyword>
<organism>
    <name type="scientific">Pseudomonas putida (strain ATCC 47054 / DSM 6125 / CFBP 8728 / NCIMB 11950 / KT2440)</name>
    <dbReference type="NCBI Taxonomy" id="160488"/>
    <lineage>
        <taxon>Bacteria</taxon>
        <taxon>Pseudomonadati</taxon>
        <taxon>Pseudomonadota</taxon>
        <taxon>Gammaproteobacteria</taxon>
        <taxon>Pseudomonadales</taxon>
        <taxon>Pseudomonadaceae</taxon>
        <taxon>Pseudomonas</taxon>
    </lineage>
</organism>
<feature type="chain" id="PRO_0000441722" description="Ornithine cyclodeaminase">
    <location>
        <begin position="1"/>
        <end position="350"/>
    </location>
</feature>
<feature type="active site" description="Proton donor/acceptor" evidence="6 9">
    <location>
        <position position="228"/>
    </location>
</feature>
<feature type="binding site" evidence="1 9">
    <location>
        <position position="45"/>
    </location>
    <ligand>
        <name>L-ornithine</name>
        <dbReference type="ChEBI" id="CHEBI:46911"/>
    </ligand>
</feature>
<feature type="binding site" evidence="1 9">
    <location>
        <position position="69"/>
    </location>
    <ligand>
        <name>L-ornithine</name>
        <dbReference type="ChEBI" id="CHEBI:46911"/>
    </ligand>
</feature>
<feature type="binding site" evidence="1 8 9">
    <location>
        <position position="84"/>
    </location>
    <ligand>
        <name>NAD(+)</name>
        <dbReference type="ChEBI" id="CHEBI:57540"/>
    </ligand>
</feature>
<feature type="binding site" evidence="1 9">
    <location>
        <position position="112"/>
    </location>
    <ligand>
        <name>L-ornithine</name>
        <dbReference type="ChEBI" id="CHEBI:46911"/>
    </ligand>
</feature>
<feature type="binding site" evidence="1 8 9">
    <location>
        <position position="112"/>
    </location>
    <ligand>
        <name>NAD(+)</name>
        <dbReference type="ChEBI" id="CHEBI:57540"/>
    </ligand>
</feature>
<feature type="binding site" evidence="1 8 9">
    <location>
        <begin position="139"/>
        <end position="140"/>
    </location>
    <ligand>
        <name>NAD(+)</name>
        <dbReference type="ChEBI" id="CHEBI:57540"/>
    </ligand>
</feature>
<feature type="binding site" evidence="1 8 9">
    <location>
        <position position="161"/>
    </location>
    <ligand>
        <name>NAD(+)</name>
        <dbReference type="ChEBI" id="CHEBI:57540"/>
    </ligand>
</feature>
<feature type="binding site" evidence="1 8 9">
    <location>
        <position position="202"/>
    </location>
    <ligand>
        <name>NAD(+)</name>
        <dbReference type="ChEBI" id="CHEBI:57540"/>
    </ligand>
</feature>
<feature type="binding site" evidence="1 8 9">
    <location>
        <begin position="225"/>
        <end position="228"/>
    </location>
    <ligand>
        <name>NAD(+)</name>
        <dbReference type="ChEBI" id="CHEBI:57540"/>
    </ligand>
</feature>
<feature type="binding site" evidence="1 9">
    <location>
        <position position="228"/>
    </location>
    <ligand>
        <name>L-ornithine</name>
        <dbReference type="ChEBI" id="CHEBI:46911"/>
    </ligand>
</feature>
<feature type="binding site" evidence="1 8 9">
    <location>
        <position position="232"/>
    </location>
    <ligand>
        <name>NAD(+)</name>
        <dbReference type="ChEBI" id="CHEBI:57540"/>
    </ligand>
</feature>
<feature type="binding site" evidence="1 8 9">
    <location>
        <position position="293"/>
    </location>
    <ligand>
        <name>NAD(+)</name>
        <dbReference type="ChEBI" id="CHEBI:57540"/>
    </ligand>
</feature>
<feature type="binding site" evidence="1 9">
    <location>
        <position position="294"/>
    </location>
    <ligand>
        <name>L-ornithine</name>
        <dbReference type="ChEBI" id="CHEBI:46911"/>
    </ligand>
</feature>
<feature type="binding site" evidence="1 8 9">
    <location>
        <position position="331"/>
    </location>
    <ligand>
        <name>NAD(+)</name>
        <dbReference type="ChEBI" id="CHEBI:57540"/>
    </ligand>
</feature>
<feature type="strand" evidence="11">
    <location>
        <begin position="3"/>
        <end position="5"/>
    </location>
</feature>
<feature type="helix" evidence="11">
    <location>
        <begin position="7"/>
        <end position="17"/>
    </location>
</feature>
<feature type="helix" evidence="11">
    <location>
        <begin position="19"/>
        <end position="35"/>
    </location>
</feature>
<feature type="helix" evidence="11">
    <location>
        <begin position="37"/>
        <end position="39"/>
    </location>
</feature>
<feature type="strand" evidence="11">
    <location>
        <begin position="46"/>
        <end position="49"/>
    </location>
</feature>
<feature type="strand" evidence="11">
    <location>
        <begin position="54"/>
        <end position="61"/>
    </location>
</feature>
<feature type="strand" evidence="11">
    <location>
        <begin position="63"/>
        <end position="73"/>
    </location>
</feature>
<feature type="helix" evidence="11">
    <location>
        <begin position="75"/>
        <end position="80"/>
    </location>
</feature>
<feature type="strand" evidence="11">
    <location>
        <begin position="84"/>
        <end position="93"/>
    </location>
</feature>
<feature type="turn" evidence="11">
    <location>
        <begin position="94"/>
        <end position="96"/>
    </location>
</feature>
<feature type="strand" evidence="11">
    <location>
        <begin position="99"/>
        <end position="104"/>
    </location>
</feature>
<feature type="helix" evidence="11">
    <location>
        <begin position="106"/>
        <end position="124"/>
    </location>
</feature>
<feature type="strand" evidence="11">
    <location>
        <begin position="131"/>
        <end position="135"/>
    </location>
</feature>
<feature type="helix" evidence="11">
    <location>
        <begin position="141"/>
        <end position="151"/>
    </location>
</feature>
<feature type="strand" evidence="11">
    <location>
        <begin position="156"/>
        <end position="160"/>
    </location>
</feature>
<feature type="helix" evidence="11">
    <location>
        <begin position="164"/>
        <end position="174"/>
    </location>
</feature>
<feature type="strand" evidence="11">
    <location>
        <begin position="181"/>
        <end position="184"/>
    </location>
</feature>
<feature type="helix" evidence="11">
    <location>
        <begin position="188"/>
        <end position="192"/>
    </location>
</feature>
<feature type="strand" evidence="11">
    <location>
        <begin position="196"/>
        <end position="200"/>
    </location>
</feature>
<feature type="strand" evidence="11">
    <location>
        <begin position="205"/>
        <end position="211"/>
    </location>
</feature>
<feature type="helix" evidence="11">
    <location>
        <begin position="213"/>
        <end position="215"/>
    </location>
</feature>
<feature type="strand" evidence="11">
    <location>
        <begin position="221"/>
        <end position="224"/>
    </location>
</feature>
<feature type="strand" evidence="11">
    <location>
        <begin position="232"/>
        <end position="235"/>
    </location>
</feature>
<feature type="helix" evidence="11">
    <location>
        <begin position="237"/>
        <end position="241"/>
    </location>
</feature>
<feature type="strand" evidence="11">
    <location>
        <begin position="243"/>
        <end position="249"/>
    </location>
</feature>
<feature type="helix" evidence="11">
    <location>
        <begin position="250"/>
        <end position="256"/>
    </location>
</feature>
<feature type="helix" evidence="11">
    <location>
        <begin position="258"/>
        <end position="261"/>
    </location>
</feature>
<feature type="helix" evidence="11">
    <location>
        <begin position="271"/>
        <end position="275"/>
    </location>
</feature>
<feature type="strand" evidence="11">
    <location>
        <begin position="289"/>
        <end position="292"/>
    </location>
</feature>
<feature type="helix" evidence="11">
    <location>
        <begin position="297"/>
        <end position="312"/>
    </location>
</feature>
<feature type="turn" evidence="11">
    <location>
        <begin position="313"/>
        <end position="315"/>
    </location>
</feature>
<feature type="helix" evidence="11">
    <location>
        <begin position="334"/>
        <end position="337"/>
    </location>
</feature>
<feature type="turn" evidence="10">
    <location>
        <begin position="339"/>
        <end position="341"/>
    </location>
</feature>
<evidence type="ECO:0000269" key="1">
    <source>
    </source>
</evidence>
<evidence type="ECO:0000269" key="2">
    <source>
    </source>
</evidence>
<evidence type="ECO:0000303" key="3">
    <source>
    </source>
</evidence>
<evidence type="ECO:0000303" key="4">
    <source>
    </source>
</evidence>
<evidence type="ECO:0000305" key="5"/>
<evidence type="ECO:0000305" key="6">
    <source>
    </source>
</evidence>
<evidence type="ECO:0000312" key="7">
    <source>
        <dbReference type="EMBL" id="AAN69134.1"/>
    </source>
</evidence>
<evidence type="ECO:0007744" key="8">
    <source>
        <dbReference type="PDB" id="1U7H"/>
    </source>
</evidence>
<evidence type="ECO:0007744" key="9">
    <source>
        <dbReference type="PDB" id="1X7D"/>
    </source>
</evidence>
<evidence type="ECO:0007829" key="10">
    <source>
        <dbReference type="PDB" id="1U7H"/>
    </source>
</evidence>
<evidence type="ECO:0007829" key="11">
    <source>
        <dbReference type="PDB" id="1X7D"/>
    </source>
</evidence>
<sequence>MTYFIDVPTMSDLVHDIGVAPFIGELAAALRDDFKRWQAFDKSARVASHSEVGVIELMPVADKSRYAFKYVNGHPANTARNLHTVMAFGVLADVDSGYPVLLSELTIATALRTAATSLMAAQALARPNARKMALIGNGAQSEFQALAFHKHLGIEEIVAYDTDPLATAKLIANLKEYSGLTIRRASSVAEAVKGVDIITTVTADKAYATIITPDMLEPGMHLNAVGGDCPGKTELHADVLRNARVFVEYEPQTRIEGEIQQLPADFPVVDLWRVLRGETEGRQSDSQVTVFDSVGFALEDYTVLRYVLQQAEKRGMGTKIDLVPWVEDDPKDLFSHTRGRAGKRRIRRVA</sequence>
<comment type="function">
    <text evidence="2">Catalyzes the conversion of L-ornithine into L-proline with release of ammonia. Is likely involved in the L-ornithine degradation pathway that allows P.putida to utilize this compound as sole carbon and nitrogen source.</text>
</comment>
<comment type="catalytic activity">
    <reaction evidence="2">
        <text>L-ornithine = L-proline + NH4(+)</text>
        <dbReference type="Rhea" id="RHEA:24368"/>
        <dbReference type="ChEBI" id="CHEBI:28938"/>
        <dbReference type="ChEBI" id="CHEBI:46911"/>
        <dbReference type="ChEBI" id="CHEBI:60039"/>
        <dbReference type="EC" id="4.3.1.12"/>
    </reaction>
</comment>
<comment type="cofactor">
    <cofactor evidence="6">
        <name>NAD(+)</name>
        <dbReference type="ChEBI" id="CHEBI:57540"/>
    </cofactor>
    <text evidence="1">Binds 1 NAD(+) pers subunit.</text>
</comment>
<comment type="pathway">
    <text evidence="2">Amino-acid biosynthesis; L-proline biosynthesis; L-proline from L-ornithine: step 1/1.</text>
</comment>
<comment type="subunit">
    <text evidence="1">Homodimer.</text>
</comment>
<comment type="biotechnology">
    <text evidence="2">Can be used for biotechnological production of L-proline when heterologously overexpressed in C.glutamicum.</text>
</comment>
<comment type="similarity">
    <text evidence="5">Belongs to the ornithine cyclodeaminase/mu-crystallin family.</text>
</comment>
<dbReference type="EC" id="4.3.1.12" evidence="2"/>
<dbReference type="EMBL" id="AE015451">
    <property type="protein sequence ID" value="AAN69134.1"/>
    <property type="molecule type" value="Genomic_DNA"/>
</dbReference>
<dbReference type="RefSeq" id="NP_745670.1">
    <property type="nucleotide sequence ID" value="NC_002947.4"/>
</dbReference>
<dbReference type="RefSeq" id="WP_010954390.1">
    <property type="nucleotide sequence ID" value="NZ_CP169744.1"/>
</dbReference>
<dbReference type="PDB" id="1U7H">
    <property type="method" value="X-ray"/>
    <property type="resolution" value="1.80 A"/>
    <property type="chains" value="A/B=1-350"/>
</dbReference>
<dbReference type="PDB" id="1X7D">
    <property type="method" value="X-ray"/>
    <property type="resolution" value="1.60 A"/>
    <property type="chains" value="A/B=1-350"/>
</dbReference>
<dbReference type="PDBsum" id="1U7H"/>
<dbReference type="PDBsum" id="1X7D"/>
<dbReference type="SMR" id="Q88H32"/>
<dbReference type="STRING" id="160488.PP_3533"/>
<dbReference type="DrugBank" id="DB03814">
    <property type="generic name" value="2-(N-morpholino)ethanesulfonic acid"/>
</dbReference>
<dbReference type="PaxDb" id="160488-PP_3533"/>
<dbReference type="KEGG" id="ppu:PP_3533"/>
<dbReference type="PATRIC" id="fig|160488.4.peg.3757"/>
<dbReference type="eggNOG" id="COG2423">
    <property type="taxonomic scope" value="Bacteria"/>
</dbReference>
<dbReference type="HOGENOM" id="CLU_042088_3_2_6"/>
<dbReference type="OrthoDB" id="9809203at2"/>
<dbReference type="PhylomeDB" id="Q88H32"/>
<dbReference type="BioCyc" id="PPUT160488:G1G01-3769-MONOMER"/>
<dbReference type="BRENDA" id="4.3.1.12">
    <property type="organism ID" value="5092"/>
</dbReference>
<dbReference type="UniPathway" id="UPA00098">
    <property type="reaction ID" value="UER00357"/>
</dbReference>
<dbReference type="EvolutionaryTrace" id="Q88H32"/>
<dbReference type="Proteomes" id="UP000000556">
    <property type="component" value="Chromosome"/>
</dbReference>
<dbReference type="GO" id="GO:0000166">
    <property type="term" value="F:nucleotide binding"/>
    <property type="evidence" value="ECO:0007669"/>
    <property type="project" value="UniProtKB-KW"/>
</dbReference>
<dbReference type="GO" id="GO:0008473">
    <property type="term" value="F:ornithine cyclodeaminase activity"/>
    <property type="evidence" value="ECO:0007669"/>
    <property type="project" value="UniProtKB-EC"/>
</dbReference>
<dbReference type="GO" id="GO:0055129">
    <property type="term" value="P:L-proline biosynthetic process"/>
    <property type="evidence" value="ECO:0007669"/>
    <property type="project" value="UniProtKB-UniPathway"/>
</dbReference>
<dbReference type="Gene3D" id="3.30.1780.10">
    <property type="entry name" value="ornithine cyclodeaminase, domain 1"/>
    <property type="match status" value="2"/>
</dbReference>
<dbReference type="InterPro" id="IPR036291">
    <property type="entry name" value="NAD(P)-bd_dom_sf"/>
</dbReference>
<dbReference type="InterPro" id="IPR003462">
    <property type="entry name" value="ODC_Mu_crystall"/>
</dbReference>
<dbReference type="InterPro" id="IPR023401">
    <property type="entry name" value="ODC_N"/>
</dbReference>
<dbReference type="NCBIfam" id="NF005762">
    <property type="entry name" value="PRK07589.1"/>
    <property type="match status" value="1"/>
</dbReference>
<dbReference type="PANTHER" id="PTHR13812">
    <property type="entry name" value="KETIMINE REDUCTASE MU-CRYSTALLIN"/>
    <property type="match status" value="1"/>
</dbReference>
<dbReference type="PANTHER" id="PTHR13812:SF19">
    <property type="entry name" value="KETIMINE REDUCTASE MU-CRYSTALLIN"/>
    <property type="match status" value="1"/>
</dbReference>
<dbReference type="Pfam" id="PF02423">
    <property type="entry name" value="OCD_Mu_crystall"/>
    <property type="match status" value="1"/>
</dbReference>
<dbReference type="PIRSF" id="PIRSF001439">
    <property type="entry name" value="CryM"/>
    <property type="match status" value="1"/>
</dbReference>
<dbReference type="SUPFAM" id="SSF51735">
    <property type="entry name" value="NAD(P)-binding Rossmann-fold domains"/>
    <property type="match status" value="1"/>
</dbReference>
<accession>Q88H32</accession>